<proteinExistence type="inferred from homology"/>
<evidence type="ECO:0000255" key="1">
    <source>
        <dbReference type="HAMAP-Rule" id="MF_00607"/>
    </source>
</evidence>
<reference key="1">
    <citation type="journal article" date="2010" name="Genome Biol. Evol.">
        <title>Continuing evolution of Burkholderia mallei through genome reduction and large-scale rearrangements.</title>
        <authorList>
            <person name="Losada L."/>
            <person name="Ronning C.M."/>
            <person name="DeShazer D."/>
            <person name="Woods D."/>
            <person name="Fedorova N."/>
            <person name="Kim H.S."/>
            <person name="Shabalina S.A."/>
            <person name="Pearson T.R."/>
            <person name="Brinkac L."/>
            <person name="Tan P."/>
            <person name="Nandi T."/>
            <person name="Crabtree J."/>
            <person name="Badger J."/>
            <person name="Beckstrom-Sternberg S."/>
            <person name="Saqib M."/>
            <person name="Schutzer S.E."/>
            <person name="Keim P."/>
            <person name="Nierman W.C."/>
        </authorList>
    </citation>
    <scope>NUCLEOTIDE SEQUENCE [LARGE SCALE GENOMIC DNA]</scope>
    <source>
        <strain>SAVP1</strain>
    </source>
</reference>
<gene>
    <name evidence="1" type="primary">rsmA</name>
    <name evidence="1" type="synonym">ksgA</name>
    <name type="ordered locus">BMASAVP1_A2734</name>
</gene>
<sequence>MSNSRQHQGHFARKRFGQNFLVDHGVIDAIVAAIRPERGERMVEIGPGLGALTGPVIARLATPGSPLHAVELDRDLIGRLEQRFGELLELHAGDALTFDFGSIARPGDEPSLRIIGNLPYNISSPLLFHLMSFAPVVIDQHFMLQNEVVERMVAEPGTKAFSRLSVMLQYRYVMDKLIDVPPESFQPPPKVDSAIVRMIPHAPHELPAVDPAVLGEVVTAAFSQRRKMLRNTLGGYRDLVDFDALGFDLARRAEDIGVDEYVRVAQAVASARASG</sequence>
<keyword id="KW-0963">Cytoplasm</keyword>
<keyword id="KW-0489">Methyltransferase</keyword>
<keyword id="KW-0694">RNA-binding</keyword>
<keyword id="KW-0698">rRNA processing</keyword>
<keyword id="KW-0949">S-adenosyl-L-methionine</keyword>
<keyword id="KW-0808">Transferase</keyword>
<name>RSMA_BURMS</name>
<comment type="function">
    <text evidence="1">Specifically dimethylates two adjacent adenosines (A1518 and A1519) in the loop of a conserved hairpin near the 3'-end of 16S rRNA in the 30S particle. May play a critical role in biogenesis of 30S subunits.</text>
</comment>
<comment type="catalytic activity">
    <reaction evidence="1">
        <text>adenosine(1518)/adenosine(1519) in 16S rRNA + 4 S-adenosyl-L-methionine = N(6)-dimethyladenosine(1518)/N(6)-dimethyladenosine(1519) in 16S rRNA + 4 S-adenosyl-L-homocysteine + 4 H(+)</text>
        <dbReference type="Rhea" id="RHEA:19609"/>
        <dbReference type="Rhea" id="RHEA-COMP:10232"/>
        <dbReference type="Rhea" id="RHEA-COMP:10233"/>
        <dbReference type="ChEBI" id="CHEBI:15378"/>
        <dbReference type="ChEBI" id="CHEBI:57856"/>
        <dbReference type="ChEBI" id="CHEBI:59789"/>
        <dbReference type="ChEBI" id="CHEBI:74411"/>
        <dbReference type="ChEBI" id="CHEBI:74493"/>
        <dbReference type="EC" id="2.1.1.182"/>
    </reaction>
</comment>
<comment type="subcellular location">
    <subcellularLocation>
        <location evidence="1">Cytoplasm</location>
    </subcellularLocation>
</comment>
<comment type="similarity">
    <text evidence="1">Belongs to the class I-like SAM-binding methyltransferase superfamily. rRNA adenine N(6)-methyltransferase family. RsmA subfamily.</text>
</comment>
<organism>
    <name type="scientific">Burkholderia mallei (strain SAVP1)</name>
    <dbReference type="NCBI Taxonomy" id="320388"/>
    <lineage>
        <taxon>Bacteria</taxon>
        <taxon>Pseudomonadati</taxon>
        <taxon>Pseudomonadota</taxon>
        <taxon>Betaproteobacteria</taxon>
        <taxon>Burkholderiales</taxon>
        <taxon>Burkholderiaceae</taxon>
        <taxon>Burkholderia</taxon>
        <taxon>pseudomallei group</taxon>
    </lineage>
</organism>
<dbReference type="EC" id="2.1.1.182" evidence="1"/>
<dbReference type="EMBL" id="CP000526">
    <property type="protein sequence ID" value="ABM51597.1"/>
    <property type="molecule type" value="Genomic_DNA"/>
</dbReference>
<dbReference type="RefSeq" id="WP_004189099.1">
    <property type="nucleotide sequence ID" value="NC_008785.1"/>
</dbReference>
<dbReference type="SMR" id="A1V727"/>
<dbReference type="GeneID" id="92977989"/>
<dbReference type="KEGG" id="bmv:BMASAVP1_A2734"/>
<dbReference type="HOGENOM" id="CLU_041220_0_1_4"/>
<dbReference type="GO" id="GO:0005829">
    <property type="term" value="C:cytosol"/>
    <property type="evidence" value="ECO:0007669"/>
    <property type="project" value="TreeGrafter"/>
</dbReference>
<dbReference type="GO" id="GO:0052908">
    <property type="term" value="F:16S rRNA (adenine(1518)-N(6)/adenine(1519)-N(6))-dimethyltransferase activity"/>
    <property type="evidence" value="ECO:0007669"/>
    <property type="project" value="UniProtKB-EC"/>
</dbReference>
<dbReference type="GO" id="GO:0003723">
    <property type="term" value="F:RNA binding"/>
    <property type="evidence" value="ECO:0007669"/>
    <property type="project" value="UniProtKB-KW"/>
</dbReference>
<dbReference type="FunFam" id="1.10.8.100:FF:000001">
    <property type="entry name" value="Ribosomal RNA small subunit methyltransferase A"/>
    <property type="match status" value="1"/>
</dbReference>
<dbReference type="Gene3D" id="1.10.8.100">
    <property type="entry name" value="Ribosomal RNA adenine dimethylase-like, domain 2"/>
    <property type="match status" value="1"/>
</dbReference>
<dbReference type="Gene3D" id="3.40.50.150">
    <property type="entry name" value="Vaccinia Virus protein VP39"/>
    <property type="match status" value="1"/>
</dbReference>
<dbReference type="HAMAP" id="MF_00607">
    <property type="entry name" value="16SrRNA_methyltr_A"/>
    <property type="match status" value="1"/>
</dbReference>
<dbReference type="InterPro" id="IPR001737">
    <property type="entry name" value="KsgA/Erm"/>
</dbReference>
<dbReference type="InterPro" id="IPR023165">
    <property type="entry name" value="rRNA_Ade_diMease-like_C"/>
</dbReference>
<dbReference type="InterPro" id="IPR020598">
    <property type="entry name" value="rRNA_Ade_methylase_Trfase_N"/>
</dbReference>
<dbReference type="InterPro" id="IPR011530">
    <property type="entry name" value="rRNA_adenine_dimethylase"/>
</dbReference>
<dbReference type="InterPro" id="IPR029063">
    <property type="entry name" value="SAM-dependent_MTases_sf"/>
</dbReference>
<dbReference type="NCBIfam" id="TIGR00755">
    <property type="entry name" value="ksgA"/>
    <property type="match status" value="1"/>
</dbReference>
<dbReference type="PANTHER" id="PTHR11727">
    <property type="entry name" value="DIMETHYLADENOSINE TRANSFERASE"/>
    <property type="match status" value="1"/>
</dbReference>
<dbReference type="PANTHER" id="PTHR11727:SF7">
    <property type="entry name" value="DIMETHYLADENOSINE TRANSFERASE-RELATED"/>
    <property type="match status" value="1"/>
</dbReference>
<dbReference type="Pfam" id="PF00398">
    <property type="entry name" value="RrnaAD"/>
    <property type="match status" value="1"/>
</dbReference>
<dbReference type="SMART" id="SM00650">
    <property type="entry name" value="rADc"/>
    <property type="match status" value="1"/>
</dbReference>
<dbReference type="SUPFAM" id="SSF53335">
    <property type="entry name" value="S-adenosyl-L-methionine-dependent methyltransferases"/>
    <property type="match status" value="1"/>
</dbReference>
<dbReference type="PROSITE" id="PS51689">
    <property type="entry name" value="SAM_RNA_A_N6_MT"/>
    <property type="match status" value="1"/>
</dbReference>
<feature type="chain" id="PRO_1000056606" description="Ribosomal RNA small subunit methyltransferase A">
    <location>
        <begin position="1"/>
        <end position="275"/>
    </location>
</feature>
<feature type="binding site" evidence="1">
    <location>
        <position position="19"/>
    </location>
    <ligand>
        <name>S-adenosyl-L-methionine</name>
        <dbReference type="ChEBI" id="CHEBI:59789"/>
    </ligand>
</feature>
<feature type="binding site" evidence="1">
    <location>
        <position position="21"/>
    </location>
    <ligand>
        <name>S-adenosyl-L-methionine</name>
        <dbReference type="ChEBI" id="CHEBI:59789"/>
    </ligand>
</feature>
<feature type="binding site" evidence="1">
    <location>
        <position position="46"/>
    </location>
    <ligand>
        <name>S-adenosyl-L-methionine</name>
        <dbReference type="ChEBI" id="CHEBI:59789"/>
    </ligand>
</feature>
<feature type="binding site" evidence="1">
    <location>
        <position position="71"/>
    </location>
    <ligand>
        <name>S-adenosyl-L-methionine</name>
        <dbReference type="ChEBI" id="CHEBI:59789"/>
    </ligand>
</feature>
<feature type="binding site" evidence="1">
    <location>
        <position position="94"/>
    </location>
    <ligand>
        <name>S-adenosyl-L-methionine</name>
        <dbReference type="ChEBI" id="CHEBI:59789"/>
    </ligand>
</feature>
<feature type="binding site" evidence="1">
    <location>
        <position position="117"/>
    </location>
    <ligand>
        <name>S-adenosyl-L-methionine</name>
        <dbReference type="ChEBI" id="CHEBI:59789"/>
    </ligand>
</feature>
<accession>A1V727</accession>
<protein>
    <recommendedName>
        <fullName evidence="1">Ribosomal RNA small subunit methyltransferase A</fullName>
        <ecNumber evidence="1">2.1.1.182</ecNumber>
    </recommendedName>
    <alternativeName>
        <fullName evidence="1">16S rRNA (adenine(1518)-N(6)/adenine(1519)-N(6))-dimethyltransferase</fullName>
    </alternativeName>
    <alternativeName>
        <fullName evidence="1">16S rRNA dimethyladenosine transferase</fullName>
    </alternativeName>
    <alternativeName>
        <fullName evidence="1">16S rRNA dimethylase</fullName>
    </alternativeName>
    <alternativeName>
        <fullName evidence="1">S-adenosylmethionine-6-N', N'-adenosyl(rRNA) dimethyltransferase</fullName>
    </alternativeName>
</protein>